<comment type="function">
    <text evidence="1">O-methyltransferase that catalyzes the 2 O-methylation steps in the ubiquinone biosynthetic pathway.</text>
</comment>
<comment type="catalytic activity">
    <reaction evidence="1">
        <text>a 3-demethylubiquinol + S-adenosyl-L-methionine = a ubiquinol + S-adenosyl-L-homocysteine + H(+)</text>
        <dbReference type="Rhea" id="RHEA:44380"/>
        <dbReference type="Rhea" id="RHEA-COMP:9566"/>
        <dbReference type="Rhea" id="RHEA-COMP:10914"/>
        <dbReference type="ChEBI" id="CHEBI:15378"/>
        <dbReference type="ChEBI" id="CHEBI:17976"/>
        <dbReference type="ChEBI" id="CHEBI:57856"/>
        <dbReference type="ChEBI" id="CHEBI:59789"/>
        <dbReference type="ChEBI" id="CHEBI:84422"/>
        <dbReference type="EC" id="2.1.1.64"/>
    </reaction>
</comment>
<comment type="catalytic activity">
    <reaction evidence="1">
        <text>a 3-(all-trans-polyprenyl)benzene-1,2-diol + S-adenosyl-L-methionine = a 2-methoxy-6-(all-trans-polyprenyl)phenol + S-adenosyl-L-homocysteine + H(+)</text>
        <dbReference type="Rhea" id="RHEA:31411"/>
        <dbReference type="Rhea" id="RHEA-COMP:9550"/>
        <dbReference type="Rhea" id="RHEA-COMP:9551"/>
        <dbReference type="ChEBI" id="CHEBI:15378"/>
        <dbReference type="ChEBI" id="CHEBI:57856"/>
        <dbReference type="ChEBI" id="CHEBI:59789"/>
        <dbReference type="ChEBI" id="CHEBI:62729"/>
        <dbReference type="ChEBI" id="CHEBI:62731"/>
        <dbReference type="EC" id="2.1.1.222"/>
    </reaction>
</comment>
<comment type="pathway">
    <text evidence="1">Cofactor biosynthesis; ubiquinone biosynthesis.</text>
</comment>
<comment type="similarity">
    <text evidence="1">Belongs to the methyltransferase superfamily. UbiG/COQ3 family.</text>
</comment>
<dbReference type="EC" id="2.1.1.222" evidence="1"/>
<dbReference type="EC" id="2.1.1.64" evidence="1"/>
<dbReference type="EMBL" id="CP000449">
    <property type="protein sequence ID" value="ABI66552.1"/>
    <property type="molecule type" value="Genomic_DNA"/>
</dbReference>
<dbReference type="RefSeq" id="WP_011644197.1">
    <property type="nucleotide sequence ID" value="NC_008347.1"/>
</dbReference>
<dbReference type="SMR" id="Q0AME1"/>
<dbReference type="STRING" id="394221.Mmar10_2260"/>
<dbReference type="KEGG" id="mmr:Mmar10_2260"/>
<dbReference type="eggNOG" id="COG2227">
    <property type="taxonomic scope" value="Bacteria"/>
</dbReference>
<dbReference type="HOGENOM" id="CLU_042432_0_0_5"/>
<dbReference type="OrthoDB" id="9801538at2"/>
<dbReference type="UniPathway" id="UPA00232"/>
<dbReference type="Proteomes" id="UP000001964">
    <property type="component" value="Chromosome"/>
</dbReference>
<dbReference type="GO" id="GO:0102208">
    <property type="term" value="F:2-polyprenyl-6-hydroxyphenol methylase activity"/>
    <property type="evidence" value="ECO:0007669"/>
    <property type="project" value="UniProtKB-EC"/>
</dbReference>
<dbReference type="GO" id="GO:0061542">
    <property type="term" value="F:3-demethylubiquinol 3-O-methyltransferase activity"/>
    <property type="evidence" value="ECO:0007669"/>
    <property type="project" value="UniProtKB-UniRule"/>
</dbReference>
<dbReference type="GO" id="GO:0010420">
    <property type="term" value="F:polyprenyldihydroxybenzoate methyltransferase activity"/>
    <property type="evidence" value="ECO:0007669"/>
    <property type="project" value="InterPro"/>
</dbReference>
<dbReference type="GO" id="GO:0032259">
    <property type="term" value="P:methylation"/>
    <property type="evidence" value="ECO:0007669"/>
    <property type="project" value="UniProtKB-KW"/>
</dbReference>
<dbReference type="CDD" id="cd02440">
    <property type="entry name" value="AdoMet_MTases"/>
    <property type="match status" value="1"/>
</dbReference>
<dbReference type="Gene3D" id="3.40.50.150">
    <property type="entry name" value="Vaccinia Virus protein VP39"/>
    <property type="match status" value="1"/>
</dbReference>
<dbReference type="HAMAP" id="MF_00472">
    <property type="entry name" value="UbiG"/>
    <property type="match status" value="1"/>
</dbReference>
<dbReference type="InterPro" id="IPR029063">
    <property type="entry name" value="SAM-dependent_MTases_sf"/>
</dbReference>
<dbReference type="InterPro" id="IPR010233">
    <property type="entry name" value="UbiG_MeTrfase"/>
</dbReference>
<dbReference type="NCBIfam" id="TIGR01983">
    <property type="entry name" value="UbiG"/>
    <property type="match status" value="1"/>
</dbReference>
<dbReference type="PANTHER" id="PTHR43464">
    <property type="entry name" value="METHYLTRANSFERASE"/>
    <property type="match status" value="1"/>
</dbReference>
<dbReference type="PANTHER" id="PTHR43464:SF19">
    <property type="entry name" value="UBIQUINONE BIOSYNTHESIS O-METHYLTRANSFERASE, MITOCHONDRIAL"/>
    <property type="match status" value="1"/>
</dbReference>
<dbReference type="Pfam" id="PF13489">
    <property type="entry name" value="Methyltransf_23"/>
    <property type="match status" value="1"/>
</dbReference>
<dbReference type="SUPFAM" id="SSF53335">
    <property type="entry name" value="S-adenosyl-L-methionine-dependent methyltransferases"/>
    <property type="match status" value="1"/>
</dbReference>
<keyword id="KW-0489">Methyltransferase</keyword>
<keyword id="KW-1185">Reference proteome</keyword>
<keyword id="KW-0949">S-adenosyl-L-methionine</keyword>
<keyword id="KW-0808">Transferase</keyword>
<keyword id="KW-0831">Ubiquinone biosynthesis</keyword>
<organism>
    <name type="scientific">Maricaulis maris (strain MCS10)</name>
    <name type="common">Caulobacter maris</name>
    <dbReference type="NCBI Taxonomy" id="394221"/>
    <lineage>
        <taxon>Bacteria</taxon>
        <taxon>Pseudomonadati</taxon>
        <taxon>Pseudomonadota</taxon>
        <taxon>Alphaproteobacteria</taxon>
        <taxon>Maricaulales</taxon>
        <taxon>Maricaulaceae</taxon>
        <taxon>Maricaulis</taxon>
    </lineage>
</organism>
<sequence>MTSAAAPNTLNRPSIDPEEVEKFSRIAAEWWDPDSKFKPLHKFNPIRLGFMRDTICDHFGLSGERPFEGLRILDIGCGGGLVCEPMARLGAHVTGVDAAEANIKTASVHADEQGLEIDYRHGVAEQLIEQDEAPFDVVLNLEVMEHVANPHTFLVDCARLVKPGGLMICATINRTSKAFALAIVGAEWVMGWLPRGTHRFHKLVKPSQIRTALREGGMSLRAPVGVSYNPLTDQFSLGEDTAVNYMMVAEKPAG</sequence>
<protein>
    <recommendedName>
        <fullName evidence="1">Ubiquinone biosynthesis O-methyltransferase</fullName>
    </recommendedName>
    <alternativeName>
        <fullName evidence="1">2-polyprenyl-6-hydroxyphenol methylase</fullName>
        <ecNumber evidence="1">2.1.1.222</ecNumber>
    </alternativeName>
    <alternativeName>
        <fullName evidence="1">3-demethylubiquinone 3-O-methyltransferase</fullName>
        <ecNumber evidence="1">2.1.1.64</ecNumber>
    </alternativeName>
</protein>
<gene>
    <name evidence="1" type="primary">ubiG</name>
    <name type="ordered locus">Mmar10_2260</name>
</gene>
<proteinExistence type="inferred from homology"/>
<accession>Q0AME1</accession>
<reference key="1">
    <citation type="submission" date="2006-08" db="EMBL/GenBank/DDBJ databases">
        <title>Complete sequence of Maricaulis maris MCS10.</title>
        <authorList>
            <consortium name="US DOE Joint Genome Institute"/>
            <person name="Copeland A."/>
            <person name="Lucas S."/>
            <person name="Lapidus A."/>
            <person name="Barry K."/>
            <person name="Detter J.C."/>
            <person name="Glavina del Rio T."/>
            <person name="Hammon N."/>
            <person name="Israni S."/>
            <person name="Dalin E."/>
            <person name="Tice H."/>
            <person name="Pitluck S."/>
            <person name="Saunders E."/>
            <person name="Brettin T."/>
            <person name="Bruce D."/>
            <person name="Han C."/>
            <person name="Tapia R."/>
            <person name="Gilna P."/>
            <person name="Schmutz J."/>
            <person name="Larimer F."/>
            <person name="Land M."/>
            <person name="Hauser L."/>
            <person name="Kyrpides N."/>
            <person name="Mikhailova N."/>
            <person name="Viollier P."/>
            <person name="Stephens C."/>
            <person name="Richardson P."/>
        </authorList>
    </citation>
    <scope>NUCLEOTIDE SEQUENCE [LARGE SCALE GENOMIC DNA]</scope>
    <source>
        <strain>MCS10</strain>
    </source>
</reference>
<evidence type="ECO:0000255" key="1">
    <source>
        <dbReference type="HAMAP-Rule" id="MF_00472"/>
    </source>
</evidence>
<feature type="chain" id="PRO_1000060388" description="Ubiquinone biosynthesis O-methyltransferase">
    <location>
        <begin position="1"/>
        <end position="254"/>
    </location>
</feature>
<feature type="binding site" evidence="1">
    <location>
        <position position="47"/>
    </location>
    <ligand>
        <name>S-adenosyl-L-methionine</name>
        <dbReference type="ChEBI" id="CHEBI:59789"/>
    </ligand>
</feature>
<feature type="binding site" evidence="1">
    <location>
        <position position="76"/>
    </location>
    <ligand>
        <name>S-adenosyl-L-methionine</name>
        <dbReference type="ChEBI" id="CHEBI:59789"/>
    </ligand>
</feature>
<feature type="binding site" evidence="1">
    <location>
        <position position="97"/>
    </location>
    <ligand>
        <name>S-adenosyl-L-methionine</name>
        <dbReference type="ChEBI" id="CHEBI:59789"/>
    </ligand>
</feature>
<feature type="binding site" evidence="1">
    <location>
        <position position="141"/>
    </location>
    <ligand>
        <name>S-adenosyl-L-methionine</name>
        <dbReference type="ChEBI" id="CHEBI:59789"/>
    </ligand>
</feature>
<name>UBIG_MARMM</name>